<feature type="chain" id="PRO_0000333704" description="3-phenylpropionate/cinnamic acid dioxygenase subunit alpha">
    <location>
        <begin position="1"/>
        <end position="453"/>
    </location>
</feature>
<feature type="domain" description="Rieske" evidence="1">
    <location>
        <begin position="44"/>
        <end position="142"/>
    </location>
</feature>
<feature type="binding site" evidence="1">
    <location>
        <position position="85"/>
    </location>
    <ligand>
        <name>[2Fe-2S] cluster</name>
        <dbReference type="ChEBI" id="CHEBI:190135"/>
    </ligand>
</feature>
<feature type="binding site" evidence="1">
    <location>
        <position position="87"/>
    </location>
    <ligand>
        <name>[2Fe-2S] cluster</name>
        <dbReference type="ChEBI" id="CHEBI:190135"/>
    </ligand>
</feature>
<feature type="binding site" evidence="1">
    <location>
        <position position="105"/>
    </location>
    <ligand>
        <name>[2Fe-2S] cluster</name>
        <dbReference type="ChEBI" id="CHEBI:190135"/>
    </ligand>
</feature>
<feature type="binding site" evidence="1">
    <location>
        <position position="108"/>
    </location>
    <ligand>
        <name>[2Fe-2S] cluster</name>
        <dbReference type="ChEBI" id="CHEBI:190135"/>
    </ligand>
</feature>
<feature type="binding site" evidence="1">
    <location>
        <position position="213"/>
    </location>
    <ligand>
        <name>Fe cation</name>
        <dbReference type="ChEBI" id="CHEBI:24875"/>
    </ligand>
</feature>
<feature type="binding site" evidence="1">
    <location>
        <position position="218"/>
    </location>
    <ligand>
        <name>Fe cation</name>
        <dbReference type="ChEBI" id="CHEBI:24875"/>
    </ligand>
</feature>
<sequence length="453" mass="51139">MTTPSDLNIYQLIDTQNGRVTPRIYTDPDIYQLELERIFGRCWLFLAHESQIPKPGDFFNTYMGEDAVVVVRQKDGSIKAFLNQCRHRAMRVSYADCGNTRAFTCPYHGWSYGINGELIDVPLEPRAYPQGLCKSHWGLNEVPCVESYKGLIFGNWDTSAPGLRDYLGDIAWYLDGMLDRREGGTEIVGGVQKWVINCNWKFPAEQFASDQYHALFSHASAVQVLGAKDDGSDKRLGDGQTARPVWETAKDALQFGQDGHGSGFFFTEKPDANVWVDGAVSSYYRETYAEAEQRLGEVRALRLAGHNNIFPTLSWLNGTATLRVWHPRSPDQVEVWAFCITDKAASDEVKAAFENSATRAFGPAGFLEQDDSENWCEIQKLLKGHRARNSKLCLEMGLGQEKRRDDGIPGITNYIFSETAARGMYQRWADLLSSESWQEVLDKTAAYQQEVMK</sequence>
<accession>A8A344</accession>
<organism>
    <name type="scientific">Escherichia coli O9:H4 (strain HS)</name>
    <dbReference type="NCBI Taxonomy" id="331112"/>
    <lineage>
        <taxon>Bacteria</taxon>
        <taxon>Pseudomonadati</taxon>
        <taxon>Pseudomonadota</taxon>
        <taxon>Gammaproteobacteria</taxon>
        <taxon>Enterobacterales</taxon>
        <taxon>Enterobacteriaceae</taxon>
        <taxon>Escherichia</taxon>
    </lineage>
</organism>
<proteinExistence type="inferred from homology"/>
<dbReference type="EC" id="1.14.12.19" evidence="1"/>
<dbReference type="EMBL" id="CP000802">
    <property type="protein sequence ID" value="ABV06948.1"/>
    <property type="molecule type" value="Genomic_DNA"/>
</dbReference>
<dbReference type="RefSeq" id="WP_000211177.1">
    <property type="nucleotide sequence ID" value="NC_009800.1"/>
</dbReference>
<dbReference type="SMR" id="A8A344"/>
<dbReference type="KEGG" id="ecx:EcHS_A2690"/>
<dbReference type="HOGENOM" id="CLU_026244_4_0_6"/>
<dbReference type="UniPathway" id="UPA00714"/>
<dbReference type="GO" id="GO:0051537">
    <property type="term" value="F:2 iron, 2 sulfur cluster binding"/>
    <property type="evidence" value="ECO:0007669"/>
    <property type="project" value="UniProtKB-KW"/>
</dbReference>
<dbReference type="GO" id="GO:0008695">
    <property type="term" value="F:3-phenylpropionate dioxygenase activity"/>
    <property type="evidence" value="ECO:0007669"/>
    <property type="project" value="UniProtKB-UniRule"/>
</dbReference>
<dbReference type="GO" id="GO:0005506">
    <property type="term" value="F:iron ion binding"/>
    <property type="evidence" value="ECO:0007669"/>
    <property type="project" value="UniProtKB-UniRule"/>
</dbReference>
<dbReference type="GO" id="GO:0019380">
    <property type="term" value="P:3-phenylpropionate catabolic process"/>
    <property type="evidence" value="ECO:0007669"/>
    <property type="project" value="UniProtKB-UniRule"/>
</dbReference>
<dbReference type="CDD" id="cd08881">
    <property type="entry name" value="RHO_alpha_C_NDO-like"/>
    <property type="match status" value="1"/>
</dbReference>
<dbReference type="FunFam" id="2.102.10.10:FF:000004">
    <property type="entry name" value="3-phenylpropionate/cinnamic acid dioxygenase subunit alpha"/>
    <property type="match status" value="1"/>
</dbReference>
<dbReference type="Gene3D" id="3.90.380.10">
    <property type="entry name" value="Naphthalene 1,2-dioxygenase Alpha Subunit, Chain A, domain 1"/>
    <property type="match status" value="1"/>
</dbReference>
<dbReference type="Gene3D" id="2.102.10.10">
    <property type="entry name" value="Rieske [2Fe-2S] iron-sulphur domain"/>
    <property type="match status" value="1"/>
</dbReference>
<dbReference type="HAMAP" id="MF_01648">
    <property type="entry name" value="HcaE"/>
    <property type="match status" value="1"/>
</dbReference>
<dbReference type="InterPro" id="IPR054883">
    <property type="entry name" value="3PPDioc_HcaE"/>
</dbReference>
<dbReference type="InterPro" id="IPR020875">
    <property type="entry name" value="HcaE"/>
</dbReference>
<dbReference type="InterPro" id="IPR043266">
    <property type="entry name" value="RHO_NdoB-like_C"/>
</dbReference>
<dbReference type="InterPro" id="IPR017941">
    <property type="entry name" value="Rieske_2Fe-2S"/>
</dbReference>
<dbReference type="InterPro" id="IPR036922">
    <property type="entry name" value="Rieske_2Fe-2S_sf"/>
</dbReference>
<dbReference type="InterPro" id="IPR015881">
    <property type="entry name" value="Ring-hydroxy_dOase_2Fe2S_BS"/>
</dbReference>
<dbReference type="InterPro" id="IPR015879">
    <property type="entry name" value="Ring_hydroxy_dOase_asu_C_dom"/>
</dbReference>
<dbReference type="InterPro" id="IPR001663">
    <property type="entry name" value="Rng_hydr_dOase-A"/>
</dbReference>
<dbReference type="NCBIfam" id="NF042946">
    <property type="entry name" value="3PPDioc_HcaE"/>
    <property type="match status" value="1"/>
</dbReference>
<dbReference type="PANTHER" id="PTHR43756:SF1">
    <property type="entry name" value="3-PHENYLPROPIONATE_CINNAMIC ACID DIOXYGENASE SUBUNIT ALPHA"/>
    <property type="match status" value="1"/>
</dbReference>
<dbReference type="PANTHER" id="PTHR43756">
    <property type="entry name" value="CHOLINE MONOOXYGENASE, CHLOROPLASTIC"/>
    <property type="match status" value="1"/>
</dbReference>
<dbReference type="Pfam" id="PF00355">
    <property type="entry name" value="Rieske"/>
    <property type="match status" value="1"/>
</dbReference>
<dbReference type="Pfam" id="PF00848">
    <property type="entry name" value="Ring_hydroxyl_A"/>
    <property type="match status" value="1"/>
</dbReference>
<dbReference type="PRINTS" id="PR00090">
    <property type="entry name" value="RNGDIOXGNASE"/>
</dbReference>
<dbReference type="SUPFAM" id="SSF55961">
    <property type="entry name" value="Bet v1-like"/>
    <property type="match status" value="1"/>
</dbReference>
<dbReference type="SUPFAM" id="SSF50022">
    <property type="entry name" value="ISP domain"/>
    <property type="match status" value="1"/>
</dbReference>
<dbReference type="PROSITE" id="PS51296">
    <property type="entry name" value="RIESKE"/>
    <property type="match status" value="1"/>
</dbReference>
<dbReference type="PROSITE" id="PS00570">
    <property type="entry name" value="RING_HYDROXYL_ALPHA"/>
    <property type="match status" value="1"/>
</dbReference>
<reference key="1">
    <citation type="journal article" date="2008" name="J. Bacteriol.">
        <title>The pangenome structure of Escherichia coli: comparative genomic analysis of E. coli commensal and pathogenic isolates.</title>
        <authorList>
            <person name="Rasko D.A."/>
            <person name="Rosovitz M.J."/>
            <person name="Myers G.S.A."/>
            <person name="Mongodin E.F."/>
            <person name="Fricke W.F."/>
            <person name="Gajer P."/>
            <person name="Crabtree J."/>
            <person name="Sebaihia M."/>
            <person name="Thomson N.R."/>
            <person name="Chaudhuri R."/>
            <person name="Henderson I.R."/>
            <person name="Sperandio V."/>
            <person name="Ravel J."/>
        </authorList>
    </citation>
    <scope>NUCLEOTIDE SEQUENCE [LARGE SCALE GENOMIC DNA]</scope>
    <source>
        <strain>HS</strain>
    </source>
</reference>
<comment type="function">
    <text evidence="1">Part of the multicomponent 3-phenylpropionate dioxygenase. Converts 3-phenylpropionic acid (PP) and cinnamic acid (CI) into 3-phenylpropionate-dihydrodiol (PP-dihydrodiol) and cinnamic acid-dihydrodiol (CI-dihydrodiol), respectively.</text>
</comment>
<comment type="catalytic activity">
    <reaction evidence="1">
        <text>3-phenylpropanoate + NADH + O2 + H(+) = 3-(cis-5,6-dihydroxycyclohexa-1,3-dien-1-yl)propanoate + NAD(+)</text>
        <dbReference type="Rhea" id="RHEA:20357"/>
        <dbReference type="ChEBI" id="CHEBI:15378"/>
        <dbReference type="ChEBI" id="CHEBI:15379"/>
        <dbReference type="ChEBI" id="CHEBI:51057"/>
        <dbReference type="ChEBI" id="CHEBI:57540"/>
        <dbReference type="ChEBI" id="CHEBI:57945"/>
        <dbReference type="ChEBI" id="CHEBI:60087"/>
        <dbReference type="EC" id="1.14.12.19"/>
    </reaction>
</comment>
<comment type="catalytic activity">
    <reaction evidence="1">
        <text>(E)-cinnamate + NADH + O2 + H(+) = (2E)-3-(cis-5,6-dihydroxycyclohexa-1,3-dien-1-yl)prop-2-enoate + NAD(+)</text>
        <dbReference type="Rhea" id="RHEA:25058"/>
        <dbReference type="ChEBI" id="CHEBI:15378"/>
        <dbReference type="ChEBI" id="CHEBI:15379"/>
        <dbReference type="ChEBI" id="CHEBI:15669"/>
        <dbReference type="ChEBI" id="CHEBI:57540"/>
        <dbReference type="ChEBI" id="CHEBI:57945"/>
        <dbReference type="ChEBI" id="CHEBI:61451"/>
        <dbReference type="EC" id="1.14.12.19"/>
    </reaction>
</comment>
<comment type="cofactor">
    <cofactor evidence="1">
        <name>Fe cation</name>
        <dbReference type="ChEBI" id="CHEBI:24875"/>
    </cofactor>
    <text evidence="1">Binds 1 Fe cation.</text>
</comment>
<comment type="cofactor">
    <cofactor evidence="1">
        <name>[2Fe-2S] cluster</name>
        <dbReference type="ChEBI" id="CHEBI:190135"/>
    </cofactor>
    <text evidence="1">Binds 1 [2Fe-2S] cluster per subunit.</text>
</comment>
<comment type="pathway">
    <text evidence="1">Aromatic compound metabolism; 3-phenylpropanoate degradation.</text>
</comment>
<comment type="subunit">
    <text evidence="1">This dioxygenase system consists of four proteins: the two subunits of the hydroxylase component (HcaE and HcaF), a ferredoxin (HcaC) and a ferredoxin reductase (HcaD).</text>
</comment>
<comment type="similarity">
    <text evidence="1">Belongs to the bacterial ring-hydroxylating dioxygenase alpha subunit family.</text>
</comment>
<name>HCAE_ECOHS</name>
<protein>
    <recommendedName>
        <fullName evidence="1">3-phenylpropionate/cinnamic acid dioxygenase subunit alpha</fullName>
        <ecNumber evidence="1">1.14.12.19</ecNumber>
    </recommendedName>
</protein>
<gene>
    <name evidence="1" type="primary">hcaE</name>
    <name type="ordered locus">EcHS_A2690</name>
</gene>
<keyword id="KW-0001">2Fe-2S</keyword>
<keyword id="KW-0058">Aromatic hydrocarbons catabolism</keyword>
<keyword id="KW-0223">Dioxygenase</keyword>
<keyword id="KW-0408">Iron</keyword>
<keyword id="KW-0411">Iron-sulfur</keyword>
<keyword id="KW-0479">Metal-binding</keyword>
<keyword id="KW-0520">NAD</keyword>
<keyword id="KW-0560">Oxidoreductase</keyword>
<evidence type="ECO:0000255" key="1">
    <source>
        <dbReference type="HAMAP-Rule" id="MF_01648"/>
    </source>
</evidence>